<proteinExistence type="inferred from homology"/>
<evidence type="ECO:0000255" key="1">
    <source>
        <dbReference type="HAMAP-Rule" id="MF_01320"/>
    </source>
</evidence>
<evidence type="ECO:0000256" key="2">
    <source>
        <dbReference type="SAM" id="MobiDB-lite"/>
    </source>
</evidence>
<evidence type="ECO:0000305" key="3"/>
<dbReference type="EMBL" id="CP000407">
    <property type="protein sequence ID" value="ABP89046.1"/>
    <property type="molecule type" value="Genomic_DNA"/>
</dbReference>
<dbReference type="SMR" id="A4VSF7"/>
<dbReference type="STRING" id="391295.SSU05_0074"/>
<dbReference type="KEGG" id="ssu:SSU05_0074"/>
<dbReference type="eggNOG" id="COG0090">
    <property type="taxonomic scope" value="Bacteria"/>
</dbReference>
<dbReference type="HOGENOM" id="CLU_036235_2_1_9"/>
<dbReference type="GO" id="GO:0015934">
    <property type="term" value="C:large ribosomal subunit"/>
    <property type="evidence" value="ECO:0007669"/>
    <property type="project" value="InterPro"/>
</dbReference>
<dbReference type="GO" id="GO:0019843">
    <property type="term" value="F:rRNA binding"/>
    <property type="evidence" value="ECO:0007669"/>
    <property type="project" value="UniProtKB-UniRule"/>
</dbReference>
<dbReference type="GO" id="GO:0003735">
    <property type="term" value="F:structural constituent of ribosome"/>
    <property type="evidence" value="ECO:0007669"/>
    <property type="project" value="InterPro"/>
</dbReference>
<dbReference type="GO" id="GO:0016740">
    <property type="term" value="F:transferase activity"/>
    <property type="evidence" value="ECO:0007669"/>
    <property type="project" value="InterPro"/>
</dbReference>
<dbReference type="GO" id="GO:0002181">
    <property type="term" value="P:cytoplasmic translation"/>
    <property type="evidence" value="ECO:0007669"/>
    <property type="project" value="TreeGrafter"/>
</dbReference>
<dbReference type="FunFam" id="2.30.30.30:FF:000001">
    <property type="entry name" value="50S ribosomal protein L2"/>
    <property type="match status" value="1"/>
</dbReference>
<dbReference type="FunFam" id="2.40.50.140:FF:000003">
    <property type="entry name" value="50S ribosomal protein L2"/>
    <property type="match status" value="1"/>
</dbReference>
<dbReference type="FunFam" id="4.10.950.10:FF:000001">
    <property type="entry name" value="50S ribosomal protein L2"/>
    <property type="match status" value="1"/>
</dbReference>
<dbReference type="Gene3D" id="2.30.30.30">
    <property type="match status" value="1"/>
</dbReference>
<dbReference type="Gene3D" id="2.40.50.140">
    <property type="entry name" value="Nucleic acid-binding proteins"/>
    <property type="match status" value="1"/>
</dbReference>
<dbReference type="Gene3D" id="4.10.950.10">
    <property type="entry name" value="Ribosomal protein L2, domain 3"/>
    <property type="match status" value="1"/>
</dbReference>
<dbReference type="HAMAP" id="MF_01320_B">
    <property type="entry name" value="Ribosomal_uL2_B"/>
    <property type="match status" value="1"/>
</dbReference>
<dbReference type="InterPro" id="IPR012340">
    <property type="entry name" value="NA-bd_OB-fold"/>
</dbReference>
<dbReference type="InterPro" id="IPR014722">
    <property type="entry name" value="Rib_uL2_dom2"/>
</dbReference>
<dbReference type="InterPro" id="IPR002171">
    <property type="entry name" value="Ribosomal_uL2"/>
</dbReference>
<dbReference type="InterPro" id="IPR005880">
    <property type="entry name" value="Ribosomal_uL2_bac/org-type"/>
</dbReference>
<dbReference type="InterPro" id="IPR022669">
    <property type="entry name" value="Ribosomal_uL2_C"/>
</dbReference>
<dbReference type="InterPro" id="IPR022671">
    <property type="entry name" value="Ribosomal_uL2_CS"/>
</dbReference>
<dbReference type="InterPro" id="IPR014726">
    <property type="entry name" value="Ribosomal_uL2_dom3"/>
</dbReference>
<dbReference type="InterPro" id="IPR022666">
    <property type="entry name" value="Ribosomal_uL2_RNA-bd_dom"/>
</dbReference>
<dbReference type="InterPro" id="IPR008991">
    <property type="entry name" value="Translation_prot_SH3-like_sf"/>
</dbReference>
<dbReference type="NCBIfam" id="TIGR01171">
    <property type="entry name" value="rplB_bact"/>
    <property type="match status" value="1"/>
</dbReference>
<dbReference type="PANTHER" id="PTHR13691:SF5">
    <property type="entry name" value="LARGE RIBOSOMAL SUBUNIT PROTEIN UL2M"/>
    <property type="match status" value="1"/>
</dbReference>
<dbReference type="PANTHER" id="PTHR13691">
    <property type="entry name" value="RIBOSOMAL PROTEIN L2"/>
    <property type="match status" value="1"/>
</dbReference>
<dbReference type="Pfam" id="PF00181">
    <property type="entry name" value="Ribosomal_L2"/>
    <property type="match status" value="1"/>
</dbReference>
<dbReference type="Pfam" id="PF03947">
    <property type="entry name" value="Ribosomal_L2_C"/>
    <property type="match status" value="1"/>
</dbReference>
<dbReference type="PIRSF" id="PIRSF002158">
    <property type="entry name" value="Ribosomal_L2"/>
    <property type="match status" value="1"/>
</dbReference>
<dbReference type="SMART" id="SM01383">
    <property type="entry name" value="Ribosomal_L2"/>
    <property type="match status" value="1"/>
</dbReference>
<dbReference type="SMART" id="SM01382">
    <property type="entry name" value="Ribosomal_L2_C"/>
    <property type="match status" value="1"/>
</dbReference>
<dbReference type="SUPFAM" id="SSF50249">
    <property type="entry name" value="Nucleic acid-binding proteins"/>
    <property type="match status" value="1"/>
</dbReference>
<dbReference type="SUPFAM" id="SSF50104">
    <property type="entry name" value="Translation proteins SH3-like domain"/>
    <property type="match status" value="1"/>
</dbReference>
<dbReference type="PROSITE" id="PS00467">
    <property type="entry name" value="RIBOSOMAL_L2"/>
    <property type="match status" value="1"/>
</dbReference>
<gene>
    <name evidence="1" type="primary">rplB</name>
    <name type="ordered locus">SSU05_0074</name>
</gene>
<comment type="function">
    <text evidence="1">One of the primary rRNA binding proteins. Required for association of the 30S and 50S subunits to form the 70S ribosome, for tRNA binding and peptide bond formation. It has been suggested to have peptidyltransferase activity; this is somewhat controversial. Makes several contacts with the 16S rRNA in the 70S ribosome.</text>
</comment>
<comment type="subunit">
    <text evidence="1">Part of the 50S ribosomal subunit. Forms a bridge to the 30S subunit in the 70S ribosome.</text>
</comment>
<comment type="similarity">
    <text evidence="1">Belongs to the universal ribosomal protein uL2 family.</text>
</comment>
<protein>
    <recommendedName>
        <fullName evidence="1">Large ribosomal subunit protein uL2</fullName>
    </recommendedName>
    <alternativeName>
        <fullName evidence="3">50S ribosomal protein L2</fullName>
    </alternativeName>
</protein>
<sequence>MGIKVYKPTTNGRRNMTSLDFAEITTSTPEKSLLVALKSKAGRNNNGRITVRHQGGGHKRFYRLVDFKRNKDGVEAIVKTIEYDPNRSANIALVHYTDGVKAYIIAPKGLEVGQRIVSGPEADIKVGNALPLANIPVGTVVHNIELKPGRGGELVRAAGASAQVLGQEGKYVLVRLQSGEVRMILGTCRATVGTVGNEQHGLVNLGKAGRSRWKGIRPTVRGSVMNPNDHPHGGGEGKAPVGRKAPSTPWGKPALGLKTRNKKAKSDKLIVRRRNQK</sequence>
<reference key="1">
    <citation type="journal article" date="2007" name="PLoS ONE">
        <title>A glimpse of streptococcal toxic shock syndrome from comparative genomics of S. suis 2 Chinese isolates.</title>
        <authorList>
            <person name="Chen C."/>
            <person name="Tang J."/>
            <person name="Dong W."/>
            <person name="Wang C."/>
            <person name="Feng Y."/>
            <person name="Wang J."/>
            <person name="Zheng F."/>
            <person name="Pan X."/>
            <person name="Liu D."/>
            <person name="Li M."/>
            <person name="Song Y."/>
            <person name="Zhu X."/>
            <person name="Sun H."/>
            <person name="Feng T."/>
            <person name="Guo Z."/>
            <person name="Ju A."/>
            <person name="Ge J."/>
            <person name="Dong Y."/>
            <person name="Sun W."/>
            <person name="Jiang Y."/>
            <person name="Wang J."/>
            <person name="Yan J."/>
            <person name="Yang H."/>
            <person name="Wang X."/>
            <person name="Gao G.F."/>
            <person name="Yang R."/>
            <person name="Wang J."/>
            <person name="Yu J."/>
        </authorList>
    </citation>
    <scope>NUCLEOTIDE SEQUENCE [LARGE SCALE GENOMIC DNA]</scope>
    <source>
        <strain>05ZYH33</strain>
    </source>
</reference>
<organism>
    <name type="scientific">Streptococcus suis (strain 05ZYH33)</name>
    <dbReference type="NCBI Taxonomy" id="391295"/>
    <lineage>
        <taxon>Bacteria</taxon>
        <taxon>Bacillati</taxon>
        <taxon>Bacillota</taxon>
        <taxon>Bacilli</taxon>
        <taxon>Lactobacillales</taxon>
        <taxon>Streptococcaceae</taxon>
        <taxon>Streptococcus</taxon>
    </lineage>
</organism>
<feature type="chain" id="PRO_0000310027" description="Large ribosomal subunit protein uL2">
    <location>
        <begin position="1"/>
        <end position="277"/>
    </location>
</feature>
<feature type="region of interest" description="Disordered" evidence="2">
    <location>
        <begin position="219"/>
        <end position="277"/>
    </location>
</feature>
<keyword id="KW-0687">Ribonucleoprotein</keyword>
<keyword id="KW-0689">Ribosomal protein</keyword>
<keyword id="KW-0694">RNA-binding</keyword>
<keyword id="KW-0699">rRNA-binding</keyword>
<accession>A4VSF7</accession>
<name>RL2_STRSY</name>